<feature type="chain" id="PRO_0000213408" description="UDP-galactose transporter homolog 1">
    <location>
        <begin position="1"/>
        <end position="354"/>
    </location>
</feature>
<feature type="transmembrane region" description="Helical" evidence="2">
    <location>
        <begin position="6"/>
        <end position="26"/>
    </location>
</feature>
<feature type="transmembrane region" description="Helical" evidence="2">
    <location>
        <begin position="54"/>
        <end position="74"/>
    </location>
</feature>
<feature type="transmembrane region" description="Helical" evidence="2">
    <location>
        <begin position="95"/>
        <end position="112"/>
    </location>
</feature>
<feature type="transmembrane region" description="Helical" evidence="2">
    <location>
        <begin position="123"/>
        <end position="143"/>
    </location>
</feature>
<feature type="transmembrane region" description="Helical" evidence="2">
    <location>
        <begin position="148"/>
        <end position="168"/>
    </location>
</feature>
<feature type="transmembrane region" description="Helical" evidence="2">
    <location>
        <begin position="227"/>
        <end position="247"/>
    </location>
</feature>
<feature type="transmembrane region" description="Helical" evidence="2">
    <location>
        <begin position="268"/>
        <end position="288"/>
    </location>
</feature>
<feature type="transmembrane region" description="Helical" evidence="2">
    <location>
        <begin position="295"/>
        <end position="317"/>
    </location>
</feature>
<feature type="transmembrane region" description="Helical" evidence="2">
    <location>
        <begin position="321"/>
        <end position="340"/>
    </location>
</feature>
<feature type="glycosylation site" description="N-linked (GlcNAc...) asparagine" evidence="2">
    <location>
        <position position="202"/>
    </location>
</feature>
<evidence type="ECO:0000250" key="1"/>
<evidence type="ECO:0000255" key="2"/>
<evidence type="ECO:0000305" key="3"/>
<reference key="1">
    <citation type="journal article" date="2004" name="Nature">
        <title>Genome evolution in yeasts.</title>
        <authorList>
            <person name="Dujon B."/>
            <person name="Sherman D."/>
            <person name="Fischer G."/>
            <person name="Durrens P."/>
            <person name="Casaregola S."/>
            <person name="Lafontaine I."/>
            <person name="de Montigny J."/>
            <person name="Marck C."/>
            <person name="Neuveglise C."/>
            <person name="Talla E."/>
            <person name="Goffard N."/>
            <person name="Frangeul L."/>
            <person name="Aigle M."/>
            <person name="Anthouard V."/>
            <person name="Babour A."/>
            <person name="Barbe V."/>
            <person name="Barnay S."/>
            <person name="Blanchin S."/>
            <person name="Beckerich J.-M."/>
            <person name="Beyne E."/>
            <person name="Bleykasten C."/>
            <person name="Boisrame A."/>
            <person name="Boyer J."/>
            <person name="Cattolico L."/>
            <person name="Confanioleri F."/>
            <person name="de Daruvar A."/>
            <person name="Despons L."/>
            <person name="Fabre E."/>
            <person name="Fairhead C."/>
            <person name="Ferry-Dumazet H."/>
            <person name="Groppi A."/>
            <person name="Hantraye F."/>
            <person name="Hennequin C."/>
            <person name="Jauniaux N."/>
            <person name="Joyet P."/>
            <person name="Kachouri R."/>
            <person name="Kerrest A."/>
            <person name="Koszul R."/>
            <person name="Lemaire M."/>
            <person name="Lesur I."/>
            <person name="Ma L."/>
            <person name="Muller H."/>
            <person name="Nicaud J.-M."/>
            <person name="Nikolski M."/>
            <person name="Oztas S."/>
            <person name="Ozier-Kalogeropoulos O."/>
            <person name="Pellenz S."/>
            <person name="Potier S."/>
            <person name="Richard G.-F."/>
            <person name="Straub M.-L."/>
            <person name="Suleau A."/>
            <person name="Swennen D."/>
            <person name="Tekaia F."/>
            <person name="Wesolowski-Louvel M."/>
            <person name="Westhof E."/>
            <person name="Wirth B."/>
            <person name="Zeniou-Meyer M."/>
            <person name="Zivanovic Y."/>
            <person name="Bolotin-Fukuhara M."/>
            <person name="Thierry A."/>
            <person name="Bouchier C."/>
            <person name="Caudron B."/>
            <person name="Scarpelli C."/>
            <person name="Gaillardin C."/>
            <person name="Weissenbach J."/>
            <person name="Wincker P."/>
            <person name="Souciet J.-L."/>
        </authorList>
    </citation>
    <scope>NUCLEOTIDE SEQUENCE [LARGE SCALE GENOMIC DNA]</scope>
    <source>
        <strain>ATCC 36239 / CBS 767 / BCRC 21394 / JCM 1990 / NBRC 0083 / IGC 2968</strain>
    </source>
</reference>
<sequence length="354" mass="38849">MKKEGGGSIITLAACILGLYASFLTWSVLQERISTKPYGSNPDTGSPDFFKAPLVINIIQAFFASIVGLIYSVVSSRSNPLSIFTQNEKPVALKFFKSFVIISLTSSLSSPLGYESLKHVDYLAYLLAKSCKLIPVMLVHFVLYRTKFPLYKCMVAGSVTVGVIIFTLSHSSTKSKADISDGKTALGMAQLIGSMLLDGLTNSTQDQLFKLRGTSPSNKHTKLTGAYLMCILNAFIFINTLAYALIFKYQSEITYTVNFVHHYPQVMMNILEFAILGSVGQVFVFIILEKFDSLILITSTVTRKMISMILSVVLFGHQLNGLQWGGVGLVFGGIGYEALVKMSMNKAPTTKKNQ</sequence>
<protein>
    <recommendedName>
        <fullName>UDP-galactose transporter homolog 1</fullName>
    </recommendedName>
</protein>
<organism>
    <name type="scientific">Debaryomyces hansenii (strain ATCC 36239 / CBS 767 / BCRC 21394 / JCM 1990 / NBRC 0083 / IGC 2968)</name>
    <name type="common">Yeast</name>
    <name type="synonym">Torulaspora hansenii</name>
    <dbReference type="NCBI Taxonomy" id="284592"/>
    <lineage>
        <taxon>Eukaryota</taxon>
        <taxon>Fungi</taxon>
        <taxon>Dikarya</taxon>
        <taxon>Ascomycota</taxon>
        <taxon>Saccharomycotina</taxon>
        <taxon>Pichiomycetes</taxon>
        <taxon>Debaryomycetaceae</taxon>
        <taxon>Debaryomyces</taxon>
    </lineage>
</organism>
<proteinExistence type="inferred from homology"/>
<accession>Q6BMV3</accession>
<accession>B5RU80</accession>
<gene>
    <name type="primary">HUT1</name>
    <name type="ordered locus">DEHA2F02376g</name>
</gene>
<comment type="function">
    <text evidence="1">May be involved in specific transport of UDP-Gal from the cytosol to the Golgi lumen. Involved in the maintenance of optimal conditions for the folding of secretory pathway proteins in the endoplasmic reticulum (By similarity).</text>
</comment>
<comment type="subcellular location">
    <subcellularLocation>
        <location evidence="1">Endoplasmic reticulum membrane</location>
        <topology evidence="1">Multi-pass membrane protein</topology>
    </subcellularLocation>
</comment>
<comment type="similarity">
    <text evidence="3">Belongs to the nucleotide-sugar transporter family. SLC35B subfamily.</text>
</comment>
<keyword id="KW-0256">Endoplasmic reticulum</keyword>
<keyword id="KW-0325">Glycoprotein</keyword>
<keyword id="KW-0472">Membrane</keyword>
<keyword id="KW-1185">Reference proteome</keyword>
<keyword id="KW-0762">Sugar transport</keyword>
<keyword id="KW-0812">Transmembrane</keyword>
<keyword id="KW-1133">Transmembrane helix</keyword>
<keyword id="KW-0813">Transport</keyword>
<dbReference type="EMBL" id="CR382138">
    <property type="protein sequence ID" value="CAR66257.1"/>
    <property type="molecule type" value="Genomic_DNA"/>
</dbReference>
<dbReference type="RefSeq" id="XP_002770726.1">
    <property type="nucleotide sequence ID" value="XM_002770680.1"/>
</dbReference>
<dbReference type="SMR" id="Q6BMV3"/>
<dbReference type="FunCoup" id="Q6BMV3">
    <property type="interactions" value="479"/>
</dbReference>
<dbReference type="STRING" id="284592.Q6BMV3"/>
<dbReference type="GlyCosmos" id="Q6BMV3">
    <property type="glycosylation" value="1 site, No reported glycans"/>
</dbReference>
<dbReference type="GeneID" id="8998860"/>
<dbReference type="KEGG" id="dha:DEHA2F02376g"/>
<dbReference type="VEuPathDB" id="FungiDB:DEHA2F02376g"/>
<dbReference type="eggNOG" id="KOG1581">
    <property type="taxonomic scope" value="Eukaryota"/>
</dbReference>
<dbReference type="HOGENOM" id="CLU_036019_0_2_1"/>
<dbReference type="InParanoid" id="Q6BMV3"/>
<dbReference type="OMA" id="CGAIGQV"/>
<dbReference type="OrthoDB" id="1601at2759"/>
<dbReference type="Proteomes" id="UP000000599">
    <property type="component" value="Chromosome F"/>
</dbReference>
<dbReference type="GO" id="GO:0005789">
    <property type="term" value="C:endoplasmic reticulum membrane"/>
    <property type="evidence" value="ECO:0007669"/>
    <property type="project" value="UniProtKB-SubCell"/>
</dbReference>
<dbReference type="GO" id="GO:0000139">
    <property type="term" value="C:Golgi membrane"/>
    <property type="evidence" value="ECO:0007669"/>
    <property type="project" value="TreeGrafter"/>
</dbReference>
<dbReference type="GO" id="GO:0005459">
    <property type="term" value="F:UDP-galactose transmembrane transporter activity"/>
    <property type="evidence" value="ECO:0007669"/>
    <property type="project" value="EnsemblFungi"/>
</dbReference>
<dbReference type="GO" id="GO:0005460">
    <property type="term" value="F:UDP-glucose transmembrane transporter activity"/>
    <property type="evidence" value="ECO:0007669"/>
    <property type="project" value="TreeGrafter"/>
</dbReference>
<dbReference type="GO" id="GO:0120112">
    <property type="term" value="P:UDP-glucose transmembrane transport into endoplasmic reticulum"/>
    <property type="evidence" value="ECO:0007669"/>
    <property type="project" value="EnsemblFungi"/>
</dbReference>
<dbReference type="InterPro" id="IPR013657">
    <property type="entry name" value="SCL35B1-4/HUT1"/>
</dbReference>
<dbReference type="PANTHER" id="PTHR10778">
    <property type="entry name" value="SOLUTE CARRIER FAMILY 35 MEMBER B"/>
    <property type="match status" value="1"/>
</dbReference>
<dbReference type="PANTHER" id="PTHR10778:SF10">
    <property type="entry name" value="SOLUTE CARRIER FAMILY 35 MEMBER B1"/>
    <property type="match status" value="1"/>
</dbReference>
<dbReference type="Pfam" id="PF08449">
    <property type="entry name" value="UAA"/>
    <property type="match status" value="1"/>
</dbReference>
<name>HUT1_DEBHA</name>